<feature type="transit peptide" description="Mitochondrion" evidence="2">
    <location>
        <begin position="1"/>
        <end position="22"/>
    </location>
</feature>
<feature type="chain" id="PRO_0000235288" description="Mitochondrial intermembrane space import and assembly protein 40">
    <location>
        <begin position="23"/>
        <end position="249"/>
    </location>
</feature>
<feature type="topological domain" description="Mitochondrial matrix" evidence="2">
    <location>
        <begin position="23"/>
        <end position="36"/>
    </location>
</feature>
<feature type="transmembrane region" description="Helical; Signal-anchor for type II membrane protein" evidence="2">
    <location>
        <begin position="37"/>
        <end position="55"/>
    </location>
</feature>
<feature type="topological domain" description="Mitochondrial intermembrane" evidence="2">
    <location>
        <begin position="56"/>
        <end position="249"/>
    </location>
</feature>
<feature type="domain" description="CHCH" evidence="3">
    <location>
        <begin position="154"/>
        <end position="198"/>
    </location>
</feature>
<feature type="region of interest" description="Disordered" evidence="4">
    <location>
        <begin position="95"/>
        <end position="136"/>
    </location>
</feature>
<feature type="region of interest" description="Disordered" evidence="4">
    <location>
        <begin position="202"/>
        <end position="249"/>
    </location>
</feature>
<feature type="short sequence motif" description="Cx9C motif 1" evidence="3">
    <location>
        <begin position="157"/>
        <end position="167"/>
    </location>
</feature>
<feature type="short sequence motif" description="Cx9C motif 2" evidence="3">
    <location>
        <begin position="180"/>
        <end position="190"/>
    </location>
</feature>
<feature type="compositionally biased region" description="Basic and acidic residues" evidence="4">
    <location>
        <begin position="95"/>
        <end position="127"/>
    </location>
</feature>
<feature type="compositionally biased region" description="Basic and acidic residues" evidence="4">
    <location>
        <begin position="232"/>
        <end position="249"/>
    </location>
</feature>
<feature type="disulfide bond" description="Redox-active" evidence="1">
    <location>
        <begin position="146"/>
        <end position="148"/>
    </location>
</feature>
<feature type="disulfide bond" evidence="3">
    <location>
        <begin position="157"/>
        <end position="190"/>
    </location>
</feature>
<feature type="disulfide bond" evidence="3">
    <location>
        <begin position="167"/>
        <end position="180"/>
    </location>
</feature>
<dbReference type="EMBL" id="CR382136">
    <property type="protein sequence ID" value="CAG86958.1"/>
    <property type="molecule type" value="Genomic_DNA"/>
</dbReference>
<dbReference type="RefSeq" id="XP_458812.1">
    <property type="nucleotide sequence ID" value="XM_458812.1"/>
</dbReference>
<dbReference type="SMR" id="Q6BSK8"/>
<dbReference type="STRING" id="284592.Q6BSK8"/>
<dbReference type="GeneID" id="2901723"/>
<dbReference type="KEGG" id="dha:DEHA2D08096g"/>
<dbReference type="VEuPathDB" id="FungiDB:DEHA2D08096g"/>
<dbReference type="eggNOG" id="KOG4149">
    <property type="taxonomic scope" value="Eukaryota"/>
</dbReference>
<dbReference type="HOGENOM" id="CLU_054990_3_1_1"/>
<dbReference type="InParanoid" id="Q6BSK8"/>
<dbReference type="OrthoDB" id="7481291at2759"/>
<dbReference type="Proteomes" id="UP000000599">
    <property type="component" value="Chromosome D"/>
</dbReference>
<dbReference type="GO" id="GO:0005743">
    <property type="term" value="C:mitochondrial inner membrane"/>
    <property type="evidence" value="ECO:0007669"/>
    <property type="project" value="UniProtKB-SubCell"/>
</dbReference>
<dbReference type="GO" id="GO:0005758">
    <property type="term" value="C:mitochondrial intermembrane space"/>
    <property type="evidence" value="ECO:0007669"/>
    <property type="project" value="TreeGrafter"/>
</dbReference>
<dbReference type="GO" id="GO:0015035">
    <property type="term" value="F:protein-disulfide reductase activity"/>
    <property type="evidence" value="ECO:0007669"/>
    <property type="project" value="InterPro"/>
</dbReference>
<dbReference type="GO" id="GO:0045041">
    <property type="term" value="P:protein import into mitochondrial intermembrane space"/>
    <property type="evidence" value="ECO:0007669"/>
    <property type="project" value="InterPro"/>
</dbReference>
<dbReference type="Gene3D" id="1.10.287.2900">
    <property type="match status" value="1"/>
</dbReference>
<dbReference type="InterPro" id="IPR010625">
    <property type="entry name" value="CHCH"/>
</dbReference>
<dbReference type="InterPro" id="IPR039289">
    <property type="entry name" value="CHCHD4"/>
</dbReference>
<dbReference type="PANTHER" id="PTHR21622">
    <property type="entry name" value="COILED-COIL-HELIX-COILED-COIL-HELIX DOMAIN CONTAINING 4"/>
    <property type="match status" value="1"/>
</dbReference>
<dbReference type="PANTHER" id="PTHR21622:SF0">
    <property type="entry name" value="COILED-COIL-HELIX-COILED-COIL-HELIX DOMAIN CONTAINING 4"/>
    <property type="match status" value="1"/>
</dbReference>
<dbReference type="Pfam" id="PF06747">
    <property type="entry name" value="CHCH"/>
    <property type="match status" value="1"/>
</dbReference>
<dbReference type="PROSITE" id="PS51808">
    <property type="entry name" value="CHCH"/>
    <property type="match status" value="1"/>
</dbReference>
<evidence type="ECO:0000250" key="1"/>
<evidence type="ECO:0000255" key="2"/>
<evidence type="ECO:0000255" key="3">
    <source>
        <dbReference type="PROSITE-ProRule" id="PRU01150"/>
    </source>
</evidence>
<evidence type="ECO:0000256" key="4">
    <source>
        <dbReference type="SAM" id="MobiDB-lite"/>
    </source>
</evidence>
<gene>
    <name type="primary">MIA40</name>
    <name type="synonym">TIM40</name>
    <name type="ordered locus">DEHA2D08096g</name>
</gene>
<comment type="function">
    <text evidence="1">Required for the import and folding of small cysteine-containing proteins (small Tim) in the mitochondrial intermembrane space (IMS). Forms a redox cycle with ERV1 that involves a disulfide relay system. Precursor proteins to be imported into the IMS are translocated in their reduced form into the mitochondria. The oxidized form of MIA40 forms a transient intermolecular disulfide bridge with the reduced precursor protein, resulting in oxidation of the precursor protein that now contains an intramolecular disulfide bond and is able to undergo folding in the IMS (By similarity).</text>
</comment>
<comment type="cofactor">
    <cofactor evidence="1">
        <name>Cu(2+)</name>
        <dbReference type="ChEBI" id="CHEBI:29036"/>
    </cofactor>
    <cofactor evidence="1">
        <name>Zn(2+)</name>
        <dbReference type="ChEBI" id="CHEBI:29105"/>
    </cofactor>
    <text evidence="1">Cu(2+) or Zn(2+).</text>
</comment>
<comment type="subunit">
    <text evidence="1">Monomer.</text>
</comment>
<comment type="subcellular location">
    <subcellularLocation>
        <location evidence="1">Mitochondrion inner membrane</location>
        <topology evidence="1">Single-pass type II membrane protein</topology>
        <orientation evidence="1">Intermembrane side</orientation>
    </subcellularLocation>
</comment>
<comment type="domain">
    <text evidence="1">The CHCH domain contains a conserved twin Cys-X(9)-Cys motif which is required for import and stability of MIA40 in mitochondria.</text>
</comment>
<keyword id="KW-1015">Disulfide bond</keyword>
<keyword id="KW-0472">Membrane</keyword>
<keyword id="KW-0496">Mitochondrion</keyword>
<keyword id="KW-0999">Mitochondrion inner membrane</keyword>
<keyword id="KW-0560">Oxidoreductase</keyword>
<keyword id="KW-0653">Protein transport</keyword>
<keyword id="KW-0676">Redox-active center</keyword>
<keyword id="KW-1185">Reference proteome</keyword>
<keyword id="KW-0735">Signal-anchor</keyword>
<keyword id="KW-0809">Transit peptide</keyword>
<keyword id="KW-0811">Translocation</keyword>
<keyword id="KW-0812">Transmembrane</keyword>
<keyword id="KW-1133">Transmembrane helix</keyword>
<keyword id="KW-0813">Transport</keyword>
<proteinExistence type="inferred from homology"/>
<sequence>MYRLATRRVLAQTTQTFSKRTFSNQGFRAAKASKTNMYLGAGIALIPVIMSINYLNGNHIANEVDENKVEEGKKKAESTGKKEFVEKAEKEAIGKADVKTKVPAEEANPETRTETDKPSEESQKDEENSYEGAAYNPETGEINWDCPCLGGMAHGPCGEEFKEAFACFIYSESEPKGIECIKKFESMRNCFREHPEHYKEELYDDEEQEPLVDVNEKKGDASEQSAETIADDATKVVKEKAKAEDSNTK</sequence>
<reference key="1">
    <citation type="journal article" date="2004" name="Nature">
        <title>Genome evolution in yeasts.</title>
        <authorList>
            <person name="Dujon B."/>
            <person name="Sherman D."/>
            <person name="Fischer G."/>
            <person name="Durrens P."/>
            <person name="Casaregola S."/>
            <person name="Lafontaine I."/>
            <person name="de Montigny J."/>
            <person name="Marck C."/>
            <person name="Neuveglise C."/>
            <person name="Talla E."/>
            <person name="Goffard N."/>
            <person name="Frangeul L."/>
            <person name="Aigle M."/>
            <person name="Anthouard V."/>
            <person name="Babour A."/>
            <person name="Barbe V."/>
            <person name="Barnay S."/>
            <person name="Blanchin S."/>
            <person name="Beckerich J.-M."/>
            <person name="Beyne E."/>
            <person name="Bleykasten C."/>
            <person name="Boisrame A."/>
            <person name="Boyer J."/>
            <person name="Cattolico L."/>
            <person name="Confanioleri F."/>
            <person name="de Daruvar A."/>
            <person name="Despons L."/>
            <person name="Fabre E."/>
            <person name="Fairhead C."/>
            <person name="Ferry-Dumazet H."/>
            <person name="Groppi A."/>
            <person name="Hantraye F."/>
            <person name="Hennequin C."/>
            <person name="Jauniaux N."/>
            <person name="Joyet P."/>
            <person name="Kachouri R."/>
            <person name="Kerrest A."/>
            <person name="Koszul R."/>
            <person name="Lemaire M."/>
            <person name="Lesur I."/>
            <person name="Ma L."/>
            <person name="Muller H."/>
            <person name="Nicaud J.-M."/>
            <person name="Nikolski M."/>
            <person name="Oztas S."/>
            <person name="Ozier-Kalogeropoulos O."/>
            <person name="Pellenz S."/>
            <person name="Potier S."/>
            <person name="Richard G.-F."/>
            <person name="Straub M.-L."/>
            <person name="Suleau A."/>
            <person name="Swennen D."/>
            <person name="Tekaia F."/>
            <person name="Wesolowski-Louvel M."/>
            <person name="Westhof E."/>
            <person name="Wirth B."/>
            <person name="Zeniou-Meyer M."/>
            <person name="Zivanovic Y."/>
            <person name="Bolotin-Fukuhara M."/>
            <person name="Thierry A."/>
            <person name="Bouchier C."/>
            <person name="Caudron B."/>
            <person name="Scarpelli C."/>
            <person name="Gaillardin C."/>
            <person name="Weissenbach J."/>
            <person name="Wincker P."/>
            <person name="Souciet J.-L."/>
        </authorList>
    </citation>
    <scope>NUCLEOTIDE SEQUENCE [LARGE SCALE GENOMIC DNA]</scope>
    <source>
        <strain>ATCC 36239 / CBS 767 / BCRC 21394 / JCM 1990 / NBRC 0083 / IGC 2968</strain>
    </source>
</reference>
<organism>
    <name type="scientific">Debaryomyces hansenii (strain ATCC 36239 / CBS 767 / BCRC 21394 / JCM 1990 / NBRC 0083 / IGC 2968)</name>
    <name type="common">Yeast</name>
    <name type="synonym">Torulaspora hansenii</name>
    <dbReference type="NCBI Taxonomy" id="284592"/>
    <lineage>
        <taxon>Eukaryota</taxon>
        <taxon>Fungi</taxon>
        <taxon>Dikarya</taxon>
        <taxon>Ascomycota</taxon>
        <taxon>Saccharomycotina</taxon>
        <taxon>Pichiomycetes</taxon>
        <taxon>Debaryomycetaceae</taxon>
        <taxon>Debaryomyces</taxon>
    </lineage>
</organism>
<protein>
    <recommendedName>
        <fullName>Mitochondrial intermembrane space import and assembly protein 40</fullName>
    </recommendedName>
    <alternativeName>
        <fullName>Mitochondrial import inner membrane translocase TIM40</fullName>
    </alternativeName>
</protein>
<name>MIA40_DEBHA</name>
<accession>Q6BSK8</accession>